<sequence length="864" mass="95107">MNYQQQLANSAAIRAEIQRFESVHPNIYSIYELLERLDEPVLQNQIREHVIAIEDAFVNSQEWTLSRSVPELKVGIVGNLASGKSALVHRYLTGTYVQEESPEGGRFKKEIVVDGQSYLLLIRDEGGPPEAQFAMWVDAVIFVFSLEDEISFQTVYHYYSRLANYRNTSEIPMVLVGTQDAISGSNPRVIDDSRARKLSNDLKRCTYYETCATYGLNVERVFQDVAQKIVATRKKQQLSIGPCKSLPNSPSHTSVCSTQVSAVHISQTSNGGGSLSDYSSSVPSTPSTSQKELRIDVPPAASTPTPVRKQSKRRSNLFTSRKGSDPDKDKKGLESRADSIGSGRAIPIKQGMLLKRSGKSLNKEWKKKYVTLSDNGVLTYHPSLHDYMQNVHGKEIDLLRTTVKVPGKRPPRATSSCAPVASPKTNGLTKEVSGLQISPNTGNVTSSTSVTQMASGPSGISLGSFSRMDGMHQRSYSVSSADQWSEGAVITNSAISSDTGLGDSVCSSPSISSTTSPKLDPPPSPHANRKKHRRKKSTSNFKVDGLSSTAEEQEENFEFIIVSLTSQSWHFEATSYEERDAWVQAIESQILASLQSCESSKNKSRLTSQNEALALQSIRNLPGNSHCVDCDAQSPDWASLNLGALMCIECSGIHRNLGTHLSRVRSLDLDDWPPELIKVMSAIGNELANSVWEGSSQGHVKPCSESPREEKERWIRAKYEQRLFLSPLPCRDLPLGQQLLRATAEEDLRAVILLLAHGSREEVNETCGEGDRRTSLHLACRKGNVVLVQLLIWYGVDVMARDFHGNTALAYAKQAVTSEVRELLLQYGCPDEQFVLMATPNLSRKNNRNNNSNAGGSGLMPTLI</sequence>
<organism>
    <name type="scientific">Xenopus laevis</name>
    <name type="common">African clawed frog</name>
    <dbReference type="NCBI Taxonomy" id="8355"/>
    <lineage>
        <taxon>Eukaryota</taxon>
        <taxon>Metazoa</taxon>
        <taxon>Chordata</taxon>
        <taxon>Craniata</taxon>
        <taxon>Vertebrata</taxon>
        <taxon>Euteleostomi</taxon>
        <taxon>Amphibia</taxon>
        <taxon>Batrachia</taxon>
        <taxon>Anura</taxon>
        <taxon>Pipoidea</taxon>
        <taxon>Pipidae</taxon>
        <taxon>Xenopodinae</taxon>
        <taxon>Xenopus</taxon>
        <taxon>Xenopus</taxon>
    </lineage>
</organism>
<accession>Q6NRL1</accession>
<reference key="1">
    <citation type="submission" date="2004-05" db="EMBL/GenBank/DDBJ databases">
        <authorList>
            <consortium name="NIH - Xenopus Gene Collection (XGC) project"/>
        </authorList>
    </citation>
    <scope>NUCLEOTIDE SEQUENCE [LARGE SCALE MRNA]</scope>
    <source>
        <tissue>Oocyte</tissue>
    </source>
</reference>
<gene>
    <name type="primary">agap1</name>
    <name type="synonym">centg2</name>
</gene>
<evidence type="ECO:0000250" key="1"/>
<evidence type="ECO:0000255" key="2"/>
<evidence type="ECO:0000255" key="3">
    <source>
        <dbReference type="PROSITE-ProRule" id="PRU00145"/>
    </source>
</evidence>
<evidence type="ECO:0000255" key="4">
    <source>
        <dbReference type="PROSITE-ProRule" id="PRU00288"/>
    </source>
</evidence>
<evidence type="ECO:0000255" key="5">
    <source>
        <dbReference type="PROSITE-ProRule" id="PRU01402"/>
    </source>
</evidence>
<evidence type="ECO:0000256" key="6">
    <source>
        <dbReference type="SAM" id="MobiDB-lite"/>
    </source>
</evidence>
<evidence type="ECO:0000305" key="7"/>
<comment type="function">
    <text evidence="1">GTPase-activating protein. Directly and specifically regulates the adapter protein 3 (AP-3)-dependent trafficking of proteins in the endosomal-lysosomal system (By similarity).</text>
</comment>
<comment type="subunit">
    <text evidence="1">Homodimer. Interacts with several subunits of the AP-3 protein complex (By similarity).</text>
</comment>
<comment type="subcellular location">
    <subcellularLocation>
        <location evidence="1">Cytoplasm</location>
    </subcellularLocation>
    <text evidence="1">Associates with the endocytic compartment.</text>
</comment>
<comment type="domain">
    <text evidence="1">The PH domain mediates AP-3 binding.</text>
</comment>
<comment type="similarity">
    <text evidence="5 7">Belongs to the centaurin gamma-like family.</text>
</comment>
<dbReference type="EMBL" id="BC070738">
    <property type="protein sequence ID" value="AAH70738.1"/>
    <property type="molecule type" value="mRNA"/>
</dbReference>
<dbReference type="RefSeq" id="NP_001084915.1">
    <property type="nucleotide sequence ID" value="NM_001091446.1"/>
</dbReference>
<dbReference type="SMR" id="Q6NRL1"/>
<dbReference type="BioGRID" id="101333">
    <property type="interactions" value="1"/>
</dbReference>
<dbReference type="IntAct" id="Q6NRL1">
    <property type="interactions" value="1"/>
</dbReference>
<dbReference type="DNASU" id="431967"/>
<dbReference type="GeneID" id="431967"/>
<dbReference type="KEGG" id="xla:431967"/>
<dbReference type="AGR" id="Xenbase:XB-GENE-981026"/>
<dbReference type="CTD" id="431967"/>
<dbReference type="Xenbase" id="XB-GENE-981026">
    <property type="gene designation" value="agap1.L"/>
</dbReference>
<dbReference type="OrthoDB" id="6136903at2759"/>
<dbReference type="Proteomes" id="UP000186698">
    <property type="component" value="Chromosome 9_10L"/>
</dbReference>
<dbReference type="Bgee" id="431967">
    <property type="expression patterns" value="Expressed in egg cell and 19 other cell types or tissues"/>
</dbReference>
<dbReference type="GO" id="GO:0005737">
    <property type="term" value="C:cytoplasm"/>
    <property type="evidence" value="ECO:0007669"/>
    <property type="project" value="UniProtKB-SubCell"/>
</dbReference>
<dbReference type="GO" id="GO:0005525">
    <property type="term" value="F:GTP binding"/>
    <property type="evidence" value="ECO:0007669"/>
    <property type="project" value="UniProtKB-KW"/>
</dbReference>
<dbReference type="GO" id="GO:0005096">
    <property type="term" value="F:GTPase activator activity"/>
    <property type="evidence" value="ECO:0000318"/>
    <property type="project" value="GO_Central"/>
</dbReference>
<dbReference type="GO" id="GO:0003924">
    <property type="term" value="F:GTPase activity"/>
    <property type="evidence" value="ECO:0000318"/>
    <property type="project" value="GO_Central"/>
</dbReference>
<dbReference type="GO" id="GO:0008270">
    <property type="term" value="F:zinc ion binding"/>
    <property type="evidence" value="ECO:0007669"/>
    <property type="project" value="UniProtKB-KW"/>
</dbReference>
<dbReference type="GO" id="GO:0015031">
    <property type="term" value="P:protein transport"/>
    <property type="evidence" value="ECO:0007669"/>
    <property type="project" value="UniProtKB-KW"/>
</dbReference>
<dbReference type="CDD" id="cd08836">
    <property type="entry name" value="ArfGap_AGAP"/>
    <property type="match status" value="1"/>
</dbReference>
<dbReference type="CDD" id="cd04103">
    <property type="entry name" value="Centaurin_gamma"/>
    <property type="match status" value="1"/>
</dbReference>
<dbReference type="CDD" id="cd01250">
    <property type="entry name" value="PH_AGAP"/>
    <property type="match status" value="1"/>
</dbReference>
<dbReference type="FunFam" id="1.10.220.150:FF:000001">
    <property type="entry name" value="Arf-GAP with GTPase, ANK repeat and PH domain-containing protein 1"/>
    <property type="match status" value="1"/>
</dbReference>
<dbReference type="FunFam" id="1.25.40.20:FF:000027">
    <property type="entry name" value="Arf-GAP with GTPase, ANK repeat and PH domain-containing protein 1"/>
    <property type="match status" value="1"/>
</dbReference>
<dbReference type="FunFam" id="3.40.50.300:FF:000178">
    <property type="entry name" value="Arf-GAP with GTPase, ANK repeat and PH domain-containing protein 1"/>
    <property type="match status" value="1"/>
</dbReference>
<dbReference type="FunFam" id="2.30.29.30:FF:000421">
    <property type="entry name" value="Arf-GAP with GTPase, ANK repeat and PH domain-containing protein 1 isoform B"/>
    <property type="match status" value="1"/>
</dbReference>
<dbReference type="FunFam" id="2.30.29.30:FF:000199">
    <property type="entry name" value="Arf-GAP with GTPase, ANK repeat and PH domain-containing protein 3"/>
    <property type="match status" value="1"/>
</dbReference>
<dbReference type="Gene3D" id="1.25.40.20">
    <property type="entry name" value="Ankyrin repeat-containing domain"/>
    <property type="match status" value="1"/>
</dbReference>
<dbReference type="Gene3D" id="1.10.220.150">
    <property type="entry name" value="Arf GTPase activating protein"/>
    <property type="match status" value="1"/>
</dbReference>
<dbReference type="Gene3D" id="3.40.50.300">
    <property type="entry name" value="P-loop containing nucleotide triphosphate hydrolases"/>
    <property type="match status" value="1"/>
</dbReference>
<dbReference type="Gene3D" id="2.30.29.30">
    <property type="entry name" value="Pleckstrin-homology domain (PH domain)/Phosphotyrosine-binding domain (PTB)"/>
    <property type="match status" value="2"/>
</dbReference>
<dbReference type="InterPro" id="IPR002110">
    <property type="entry name" value="Ankyrin_rpt"/>
</dbReference>
<dbReference type="InterPro" id="IPR036770">
    <property type="entry name" value="Ankyrin_rpt-contain_sf"/>
</dbReference>
<dbReference type="InterPro" id="IPR051282">
    <property type="entry name" value="Arf-GAP_GTPase_ANK_PH"/>
</dbReference>
<dbReference type="InterPro" id="IPR037278">
    <property type="entry name" value="ARFGAP/RecO"/>
</dbReference>
<dbReference type="InterPro" id="IPR001164">
    <property type="entry name" value="ArfGAP_dom"/>
</dbReference>
<dbReference type="InterPro" id="IPR038508">
    <property type="entry name" value="ArfGAP_dom_sf"/>
</dbReference>
<dbReference type="InterPro" id="IPR027417">
    <property type="entry name" value="P-loop_NTPase"/>
</dbReference>
<dbReference type="InterPro" id="IPR011993">
    <property type="entry name" value="PH-like_dom_sf"/>
</dbReference>
<dbReference type="InterPro" id="IPR001849">
    <property type="entry name" value="PH_domain"/>
</dbReference>
<dbReference type="InterPro" id="IPR001806">
    <property type="entry name" value="Small_GTPase"/>
</dbReference>
<dbReference type="PANTHER" id="PTHR45819:SF1">
    <property type="entry name" value="ARF-GAP WITH GTPASE, ANK REPEAT AND PH DOMAIN-CONTAINING PROTEIN 1"/>
    <property type="match status" value="1"/>
</dbReference>
<dbReference type="PANTHER" id="PTHR45819">
    <property type="entry name" value="CENTAURIN-GAMMA-1A"/>
    <property type="match status" value="1"/>
</dbReference>
<dbReference type="Pfam" id="PF13857">
    <property type="entry name" value="Ank_5"/>
    <property type="match status" value="1"/>
</dbReference>
<dbReference type="Pfam" id="PF01412">
    <property type="entry name" value="ArfGap"/>
    <property type="match status" value="1"/>
</dbReference>
<dbReference type="Pfam" id="PF00071">
    <property type="entry name" value="Ras"/>
    <property type="match status" value="1"/>
</dbReference>
<dbReference type="PRINTS" id="PR00405">
    <property type="entry name" value="REVINTRACTNG"/>
</dbReference>
<dbReference type="SMART" id="SM00248">
    <property type="entry name" value="ANK"/>
    <property type="match status" value="2"/>
</dbReference>
<dbReference type="SMART" id="SM00105">
    <property type="entry name" value="ArfGap"/>
    <property type="match status" value="1"/>
</dbReference>
<dbReference type="SMART" id="SM00233">
    <property type="entry name" value="PH"/>
    <property type="match status" value="1"/>
</dbReference>
<dbReference type="SMART" id="SM00175">
    <property type="entry name" value="RAB"/>
    <property type="match status" value="1"/>
</dbReference>
<dbReference type="SMART" id="SM00173">
    <property type="entry name" value="RAS"/>
    <property type="match status" value="1"/>
</dbReference>
<dbReference type="SUPFAM" id="SSF48403">
    <property type="entry name" value="Ankyrin repeat"/>
    <property type="match status" value="1"/>
</dbReference>
<dbReference type="SUPFAM" id="SSF57863">
    <property type="entry name" value="ArfGap/RecO-like zinc finger"/>
    <property type="match status" value="1"/>
</dbReference>
<dbReference type="SUPFAM" id="SSF52540">
    <property type="entry name" value="P-loop containing nucleoside triphosphate hydrolases"/>
    <property type="match status" value="1"/>
</dbReference>
<dbReference type="SUPFAM" id="SSF50729">
    <property type="entry name" value="PH domain-like"/>
    <property type="match status" value="1"/>
</dbReference>
<dbReference type="PROSITE" id="PS50297">
    <property type="entry name" value="ANK_REP_REGION"/>
    <property type="match status" value="1"/>
</dbReference>
<dbReference type="PROSITE" id="PS50088">
    <property type="entry name" value="ANK_REPEAT"/>
    <property type="match status" value="1"/>
</dbReference>
<dbReference type="PROSITE" id="PS50115">
    <property type="entry name" value="ARFGAP"/>
    <property type="match status" value="1"/>
</dbReference>
<dbReference type="PROSITE" id="PS52057">
    <property type="entry name" value="GLD"/>
    <property type="match status" value="1"/>
</dbReference>
<dbReference type="PROSITE" id="PS50003">
    <property type="entry name" value="PH_DOMAIN"/>
    <property type="match status" value="1"/>
</dbReference>
<name>AGAP1_XENLA</name>
<feature type="chain" id="PRO_0000235915" description="Arf-GAP with GTPase, ANK repeat and PH domain-containing protein 1">
    <location>
        <begin position="1"/>
        <end position="864"/>
    </location>
</feature>
<feature type="domain" description="GLD" evidence="5">
    <location>
        <begin position="67"/>
        <end position="241"/>
    </location>
</feature>
<feature type="domain" description="PH" evidence="3">
    <location>
        <begin position="346"/>
        <end position="591"/>
    </location>
</feature>
<feature type="domain" description="Arf-GAP" evidence="4">
    <location>
        <begin position="612"/>
        <end position="732"/>
    </location>
</feature>
<feature type="repeat" description="ANK 1">
    <location>
        <begin position="771"/>
        <end position="800"/>
    </location>
</feature>
<feature type="repeat" description="ANK 2">
    <location>
        <begin position="804"/>
        <end position="833"/>
    </location>
</feature>
<feature type="zinc finger region" description="C4-type" evidence="4">
    <location>
        <begin position="627"/>
        <end position="650"/>
    </location>
</feature>
<feature type="region of interest" description="Small GTPase-like">
    <location>
        <begin position="66"/>
        <end position="276"/>
    </location>
</feature>
<feature type="region of interest" description="Disordered" evidence="6">
    <location>
        <begin position="266"/>
        <end position="343"/>
    </location>
</feature>
<feature type="region of interest" description="Disordered" evidence="6">
    <location>
        <begin position="405"/>
        <end position="455"/>
    </location>
</feature>
<feature type="region of interest" description="Disordered" evidence="6">
    <location>
        <begin position="499"/>
        <end position="549"/>
    </location>
</feature>
<feature type="region of interest" description="Disordered" evidence="6">
    <location>
        <begin position="845"/>
        <end position="864"/>
    </location>
</feature>
<feature type="compositionally biased region" description="Low complexity" evidence="6">
    <location>
        <begin position="275"/>
        <end position="289"/>
    </location>
</feature>
<feature type="compositionally biased region" description="Basic and acidic residues" evidence="6">
    <location>
        <begin position="322"/>
        <end position="337"/>
    </location>
</feature>
<feature type="compositionally biased region" description="Polar residues" evidence="6">
    <location>
        <begin position="413"/>
        <end position="428"/>
    </location>
</feature>
<feature type="compositionally biased region" description="Low complexity" evidence="6">
    <location>
        <begin position="507"/>
        <end position="517"/>
    </location>
</feature>
<feature type="compositionally biased region" description="Basic residues" evidence="6">
    <location>
        <begin position="527"/>
        <end position="537"/>
    </location>
</feature>
<feature type="compositionally biased region" description="Polar residues" evidence="6">
    <location>
        <begin position="538"/>
        <end position="549"/>
    </location>
</feature>
<feature type="compositionally biased region" description="Low complexity" evidence="6">
    <location>
        <begin position="845"/>
        <end position="854"/>
    </location>
</feature>
<feature type="binding site" evidence="2">
    <location>
        <begin position="78"/>
        <end position="85"/>
    </location>
    <ligand>
        <name>GTP</name>
        <dbReference type="ChEBI" id="CHEBI:37565"/>
    </ligand>
</feature>
<feature type="binding site" evidence="2">
    <location>
        <begin position="122"/>
        <end position="126"/>
    </location>
    <ligand>
        <name>GTP</name>
        <dbReference type="ChEBI" id="CHEBI:37565"/>
    </ligand>
</feature>
<feature type="binding site" evidence="2">
    <location>
        <begin position="178"/>
        <end position="181"/>
    </location>
    <ligand>
        <name>GTP</name>
        <dbReference type="ChEBI" id="CHEBI:37565"/>
    </ligand>
</feature>
<protein>
    <recommendedName>
        <fullName>Arf-GAP with GTPase, ANK repeat and PH domain-containing protein 1</fullName>
        <shortName>AGAP-1</shortName>
    </recommendedName>
    <alternativeName>
        <fullName>Centaurin-gamma-2</fullName>
        <shortName>Cnt-g2</shortName>
    </alternativeName>
</protein>
<proteinExistence type="evidence at transcript level"/>
<keyword id="KW-0040">ANK repeat</keyword>
<keyword id="KW-0963">Cytoplasm</keyword>
<keyword id="KW-0342">GTP-binding</keyword>
<keyword id="KW-0343">GTPase activation</keyword>
<keyword id="KW-0479">Metal-binding</keyword>
<keyword id="KW-0547">Nucleotide-binding</keyword>
<keyword id="KW-0653">Protein transport</keyword>
<keyword id="KW-1185">Reference proteome</keyword>
<keyword id="KW-0677">Repeat</keyword>
<keyword id="KW-0813">Transport</keyword>
<keyword id="KW-0862">Zinc</keyword>
<keyword id="KW-0863">Zinc-finger</keyword>